<name>RL19_CANLF</name>
<sequence>MSMLRLQKRLASSVLRCGKKKVWLDPNETNEIANANSRQQIRKLIKDGLIIRKPVTVHSRARCRKNTLARRKGRHMGIGKRKGTANARMPEKVTWMRRMRILRRLLRRYRESKKIDRHMYHSLYLKVKGNVFKNKRILMEHIHKLKADKARKKLLADQAEARRSKTKEARKRREERLQAKKEEIIKTLSKEEETKK</sequence>
<accession>D0VWQ5</accession>
<keyword id="KW-0002">3D-structure</keyword>
<keyword id="KW-0164">Citrullination</keyword>
<keyword id="KW-0963">Cytoplasm</keyword>
<keyword id="KW-1017">Isopeptide bond</keyword>
<keyword id="KW-0597">Phosphoprotein</keyword>
<keyword id="KW-1185">Reference proteome</keyword>
<keyword id="KW-0687">Ribonucleoprotein</keyword>
<keyword id="KW-0689">Ribosomal protein</keyword>
<keyword id="KW-0832">Ubl conjugation</keyword>
<gene>
    <name type="primary">RPL19</name>
</gene>
<dbReference type="RefSeq" id="NP_001300711.1">
    <property type="nucleotide sequence ID" value="NM_001313782.1"/>
</dbReference>
<dbReference type="PDB" id="4V5Z">
    <property type="method" value="EM"/>
    <property type="resolution" value="8.70 A"/>
    <property type="chains" value="7=98-110, p=1-196"/>
</dbReference>
<dbReference type="PDBsum" id="4V5Z"/>
<dbReference type="SMR" id="D0VWQ5"/>
<dbReference type="FunCoup" id="D0VWQ5">
    <property type="interactions" value="2364"/>
</dbReference>
<dbReference type="STRING" id="9615.ENSCAFP00000024264"/>
<dbReference type="PaxDb" id="9612-ENSCAFP00000024264"/>
<dbReference type="Ensembl" id="ENSCAFT00000026132.5">
    <property type="protein sequence ID" value="ENSCAFP00000024264.4"/>
    <property type="gene ID" value="ENSCAFG00000016493.5"/>
</dbReference>
<dbReference type="Ensembl" id="ENSCAFT00030015754.1">
    <property type="protein sequence ID" value="ENSCAFP00030013737.1"/>
    <property type="gene ID" value="ENSCAFG00030008501.1"/>
</dbReference>
<dbReference type="Ensembl" id="ENSCAFT00040005165.1">
    <property type="protein sequence ID" value="ENSCAFP00040004441.1"/>
    <property type="gene ID" value="ENSCAFG00040002691.1"/>
</dbReference>
<dbReference type="Ensembl" id="ENSCAFT00845024224.1">
    <property type="protein sequence ID" value="ENSCAFP00845019031.1"/>
    <property type="gene ID" value="ENSCAFG00845013552.1"/>
</dbReference>
<dbReference type="GeneID" id="403682"/>
<dbReference type="KEGG" id="cfa:403682"/>
<dbReference type="CTD" id="6143"/>
<dbReference type="VEuPathDB" id="HostDB:ENSCAFG00845013552"/>
<dbReference type="VGNC" id="VGNC:45715">
    <property type="gene designation" value="RPL19"/>
</dbReference>
<dbReference type="eggNOG" id="KOG1696">
    <property type="taxonomic scope" value="Eukaryota"/>
</dbReference>
<dbReference type="GeneTree" id="ENSGT00390000012628"/>
<dbReference type="InParanoid" id="D0VWQ5"/>
<dbReference type="OrthoDB" id="5407653at2759"/>
<dbReference type="Reactome" id="R-CFA-156827">
    <property type="pathway name" value="L13a-mediated translational silencing of Ceruloplasmin expression"/>
</dbReference>
<dbReference type="Reactome" id="R-CFA-1799339">
    <property type="pathway name" value="SRP-dependent cotranslational protein targeting to membrane"/>
</dbReference>
<dbReference type="Reactome" id="R-CFA-6791226">
    <property type="pathway name" value="Major pathway of rRNA processing in the nucleolus and cytosol"/>
</dbReference>
<dbReference type="Reactome" id="R-CFA-72689">
    <property type="pathway name" value="Formation of a pool of free 40S subunits"/>
</dbReference>
<dbReference type="Reactome" id="R-CFA-72706">
    <property type="pathway name" value="GTP hydrolysis and joining of the 60S ribosomal subunit"/>
</dbReference>
<dbReference type="Reactome" id="R-CFA-975956">
    <property type="pathway name" value="Nonsense Mediated Decay (NMD) independent of the Exon Junction Complex (EJC)"/>
</dbReference>
<dbReference type="Reactome" id="R-CFA-975957">
    <property type="pathway name" value="Nonsense Mediated Decay (NMD) enhanced by the Exon Junction Complex (EJC)"/>
</dbReference>
<dbReference type="Proteomes" id="UP000002254">
    <property type="component" value="Chromosome 9"/>
</dbReference>
<dbReference type="Proteomes" id="UP000694429">
    <property type="component" value="Chromosome 9"/>
</dbReference>
<dbReference type="Proteomes" id="UP000694542">
    <property type="component" value="Chromosome 9"/>
</dbReference>
<dbReference type="Proteomes" id="UP000805418">
    <property type="component" value="Chromosome 9"/>
</dbReference>
<dbReference type="Bgee" id="ENSCAFG00000016493">
    <property type="expression patterns" value="Expressed in mammary gland and 47 other cell types or tissues"/>
</dbReference>
<dbReference type="GO" id="GO:0022625">
    <property type="term" value="C:cytosolic large ribosomal subunit"/>
    <property type="evidence" value="ECO:0000318"/>
    <property type="project" value="GO_Central"/>
</dbReference>
<dbReference type="GO" id="GO:0005730">
    <property type="term" value="C:nucleolus"/>
    <property type="evidence" value="ECO:0007669"/>
    <property type="project" value="Ensembl"/>
</dbReference>
<dbReference type="GO" id="GO:0045202">
    <property type="term" value="C:synapse"/>
    <property type="evidence" value="ECO:0007669"/>
    <property type="project" value="Ensembl"/>
</dbReference>
<dbReference type="GO" id="GO:0003723">
    <property type="term" value="F:RNA binding"/>
    <property type="evidence" value="ECO:0000318"/>
    <property type="project" value="GO_Central"/>
</dbReference>
<dbReference type="GO" id="GO:0003735">
    <property type="term" value="F:structural constituent of ribosome"/>
    <property type="evidence" value="ECO:0000318"/>
    <property type="project" value="GO_Central"/>
</dbReference>
<dbReference type="GO" id="GO:0002181">
    <property type="term" value="P:cytoplasmic translation"/>
    <property type="evidence" value="ECO:0007669"/>
    <property type="project" value="Ensembl"/>
</dbReference>
<dbReference type="CDD" id="cd01417">
    <property type="entry name" value="Ribosomal_L19e_E"/>
    <property type="match status" value="1"/>
</dbReference>
<dbReference type="FunFam" id="1.10.1200.240:FF:000001">
    <property type="entry name" value="Ribosomal protein L19"/>
    <property type="match status" value="1"/>
</dbReference>
<dbReference type="FunFam" id="1.10.1650.10:FF:000001">
    <property type="entry name" value="Ribosomal protein L19"/>
    <property type="match status" value="1"/>
</dbReference>
<dbReference type="Gene3D" id="1.10.1200.240">
    <property type="match status" value="1"/>
</dbReference>
<dbReference type="Gene3D" id="1.10.1650.10">
    <property type="match status" value="1"/>
</dbReference>
<dbReference type="HAMAP" id="MF_01475">
    <property type="entry name" value="Ribosomal_eL19"/>
    <property type="match status" value="1"/>
</dbReference>
<dbReference type="InterPro" id="IPR035970">
    <property type="entry name" value="60S_ribosomal_eL19_sf"/>
</dbReference>
<dbReference type="InterPro" id="IPR039547">
    <property type="entry name" value="Ribosomal_eL19"/>
</dbReference>
<dbReference type="InterPro" id="IPR023638">
    <property type="entry name" value="Ribosomal_eL19_CS"/>
</dbReference>
<dbReference type="InterPro" id="IPR000196">
    <property type="entry name" value="Ribosomal_eL19_dom"/>
</dbReference>
<dbReference type="InterPro" id="IPR015972">
    <property type="entry name" value="Ribosomal_eL19_dom1"/>
</dbReference>
<dbReference type="InterPro" id="IPR033935">
    <property type="entry name" value="Ribosomal_eL19_euk"/>
</dbReference>
<dbReference type="NCBIfam" id="NF006343">
    <property type="entry name" value="PRK08570.1"/>
    <property type="match status" value="1"/>
</dbReference>
<dbReference type="PANTHER" id="PTHR10722">
    <property type="entry name" value="60S RIBOSOMAL PROTEIN L19"/>
    <property type="match status" value="1"/>
</dbReference>
<dbReference type="Pfam" id="PF01280">
    <property type="entry name" value="Ribosomal_L19e"/>
    <property type="match status" value="1"/>
</dbReference>
<dbReference type="Pfam" id="PF25476">
    <property type="entry name" value="Ribosomal_L19e_C"/>
    <property type="match status" value="1"/>
</dbReference>
<dbReference type="SMART" id="SM01416">
    <property type="entry name" value="Ribosomal_L19e"/>
    <property type="match status" value="1"/>
</dbReference>
<dbReference type="SUPFAM" id="SSF48140">
    <property type="entry name" value="Ribosomal protein L19 (L19e)"/>
    <property type="match status" value="1"/>
</dbReference>
<dbReference type="PROSITE" id="PS00526">
    <property type="entry name" value="RIBOSOMAL_L19E"/>
    <property type="match status" value="1"/>
</dbReference>
<proteinExistence type="evidence at protein level"/>
<protein>
    <recommendedName>
        <fullName evidence="4">Large ribosomal subunit protein eL19</fullName>
    </recommendedName>
    <alternativeName>
        <fullName>60S ribosomal protein L19</fullName>
    </alternativeName>
</protein>
<comment type="function">
    <text evidence="1">Component of the large ribosomal subunit. The ribosome is a large ribonucleoprotein complex responsible for the synthesis of proteins in the cell.</text>
</comment>
<comment type="subunit">
    <text evidence="1">Component of the large ribosomal subunit.</text>
</comment>
<comment type="subcellular location">
    <subcellularLocation>
        <location evidence="1">Cytoplasm</location>
    </subcellularLocation>
</comment>
<comment type="PTM">
    <text evidence="2">Citrullinated by PADI4.</text>
</comment>
<comment type="similarity">
    <text evidence="4">Belongs to the eukaryotic ribosomal protein eL19 family.</text>
</comment>
<reference key="1">
    <citation type="journal article" date="2005" name="Nature">
        <title>Genome sequence, comparative analysis and haplotype structure of the domestic dog.</title>
        <authorList>
            <person name="Lindblad-Toh K."/>
            <person name="Wade C.M."/>
            <person name="Mikkelsen T.S."/>
            <person name="Karlsson E.K."/>
            <person name="Jaffe D.B."/>
            <person name="Kamal M."/>
            <person name="Clamp M."/>
            <person name="Chang J.L."/>
            <person name="Kulbokas E.J. III"/>
            <person name="Zody M.C."/>
            <person name="Mauceli E."/>
            <person name="Xie X."/>
            <person name="Breen M."/>
            <person name="Wayne R.K."/>
            <person name="Ostrander E.A."/>
            <person name="Ponting C.P."/>
            <person name="Galibert F."/>
            <person name="Smith D.R."/>
            <person name="deJong P.J."/>
            <person name="Kirkness E.F."/>
            <person name="Alvarez P."/>
            <person name="Biagi T."/>
            <person name="Brockman W."/>
            <person name="Butler J."/>
            <person name="Chin C.-W."/>
            <person name="Cook A."/>
            <person name="Cuff J."/>
            <person name="Daly M.J."/>
            <person name="DeCaprio D."/>
            <person name="Gnerre S."/>
            <person name="Grabherr M."/>
            <person name="Kellis M."/>
            <person name="Kleber M."/>
            <person name="Bardeleben C."/>
            <person name="Goodstadt L."/>
            <person name="Heger A."/>
            <person name="Hitte C."/>
            <person name="Kim L."/>
            <person name="Koepfli K.-P."/>
            <person name="Parker H.G."/>
            <person name="Pollinger J.P."/>
            <person name="Searle S.M.J."/>
            <person name="Sutter N.B."/>
            <person name="Thomas R."/>
            <person name="Webber C."/>
            <person name="Baldwin J."/>
            <person name="Abebe A."/>
            <person name="Abouelleil A."/>
            <person name="Aftuck L."/>
            <person name="Ait-Zahra M."/>
            <person name="Aldredge T."/>
            <person name="Allen N."/>
            <person name="An P."/>
            <person name="Anderson S."/>
            <person name="Antoine C."/>
            <person name="Arachchi H."/>
            <person name="Aslam A."/>
            <person name="Ayotte L."/>
            <person name="Bachantsang P."/>
            <person name="Barry A."/>
            <person name="Bayul T."/>
            <person name="Benamara M."/>
            <person name="Berlin A."/>
            <person name="Bessette D."/>
            <person name="Blitshteyn B."/>
            <person name="Bloom T."/>
            <person name="Blye J."/>
            <person name="Boguslavskiy L."/>
            <person name="Bonnet C."/>
            <person name="Boukhgalter B."/>
            <person name="Brown A."/>
            <person name="Cahill P."/>
            <person name="Calixte N."/>
            <person name="Camarata J."/>
            <person name="Cheshatsang Y."/>
            <person name="Chu J."/>
            <person name="Citroen M."/>
            <person name="Collymore A."/>
            <person name="Cooke P."/>
            <person name="Dawoe T."/>
            <person name="Daza R."/>
            <person name="Decktor K."/>
            <person name="DeGray S."/>
            <person name="Dhargay N."/>
            <person name="Dooley K."/>
            <person name="Dooley K."/>
            <person name="Dorje P."/>
            <person name="Dorjee K."/>
            <person name="Dorris L."/>
            <person name="Duffey N."/>
            <person name="Dupes A."/>
            <person name="Egbiremolen O."/>
            <person name="Elong R."/>
            <person name="Falk J."/>
            <person name="Farina A."/>
            <person name="Faro S."/>
            <person name="Ferguson D."/>
            <person name="Ferreira P."/>
            <person name="Fisher S."/>
            <person name="FitzGerald M."/>
            <person name="Foley K."/>
            <person name="Foley C."/>
            <person name="Franke A."/>
            <person name="Friedrich D."/>
            <person name="Gage D."/>
            <person name="Garber M."/>
            <person name="Gearin G."/>
            <person name="Giannoukos G."/>
            <person name="Goode T."/>
            <person name="Goyette A."/>
            <person name="Graham J."/>
            <person name="Grandbois E."/>
            <person name="Gyaltsen K."/>
            <person name="Hafez N."/>
            <person name="Hagopian D."/>
            <person name="Hagos B."/>
            <person name="Hall J."/>
            <person name="Healy C."/>
            <person name="Hegarty R."/>
            <person name="Honan T."/>
            <person name="Horn A."/>
            <person name="Houde N."/>
            <person name="Hughes L."/>
            <person name="Hunnicutt L."/>
            <person name="Husby M."/>
            <person name="Jester B."/>
            <person name="Jones C."/>
            <person name="Kamat A."/>
            <person name="Kanga B."/>
            <person name="Kells C."/>
            <person name="Khazanovich D."/>
            <person name="Kieu A.C."/>
            <person name="Kisner P."/>
            <person name="Kumar M."/>
            <person name="Lance K."/>
            <person name="Landers T."/>
            <person name="Lara M."/>
            <person name="Lee W."/>
            <person name="Leger J.-P."/>
            <person name="Lennon N."/>
            <person name="Leuper L."/>
            <person name="LeVine S."/>
            <person name="Liu J."/>
            <person name="Liu X."/>
            <person name="Lokyitsang Y."/>
            <person name="Lokyitsang T."/>
            <person name="Lui A."/>
            <person name="Macdonald J."/>
            <person name="Major J."/>
            <person name="Marabella R."/>
            <person name="Maru K."/>
            <person name="Matthews C."/>
            <person name="McDonough S."/>
            <person name="Mehta T."/>
            <person name="Meldrim J."/>
            <person name="Melnikov A."/>
            <person name="Meneus L."/>
            <person name="Mihalev A."/>
            <person name="Mihova T."/>
            <person name="Miller K."/>
            <person name="Mittelman R."/>
            <person name="Mlenga V."/>
            <person name="Mulrain L."/>
            <person name="Munson G."/>
            <person name="Navidi A."/>
            <person name="Naylor J."/>
            <person name="Nguyen T."/>
            <person name="Nguyen N."/>
            <person name="Nguyen C."/>
            <person name="Nguyen T."/>
            <person name="Nicol R."/>
            <person name="Norbu N."/>
            <person name="Norbu C."/>
            <person name="Novod N."/>
            <person name="Nyima T."/>
            <person name="Olandt P."/>
            <person name="O'Neill B."/>
            <person name="O'Neill K."/>
            <person name="Osman S."/>
            <person name="Oyono L."/>
            <person name="Patti C."/>
            <person name="Perrin D."/>
            <person name="Phunkhang P."/>
            <person name="Pierre F."/>
            <person name="Priest M."/>
            <person name="Rachupka A."/>
            <person name="Raghuraman S."/>
            <person name="Rameau R."/>
            <person name="Ray V."/>
            <person name="Raymond C."/>
            <person name="Rege F."/>
            <person name="Rise C."/>
            <person name="Rogers J."/>
            <person name="Rogov P."/>
            <person name="Sahalie J."/>
            <person name="Settipalli S."/>
            <person name="Sharpe T."/>
            <person name="Shea T."/>
            <person name="Sheehan M."/>
            <person name="Sherpa N."/>
            <person name="Shi J."/>
            <person name="Shih D."/>
            <person name="Sloan J."/>
            <person name="Smith C."/>
            <person name="Sparrow T."/>
            <person name="Stalker J."/>
            <person name="Stange-Thomann N."/>
            <person name="Stavropoulos S."/>
            <person name="Stone C."/>
            <person name="Stone S."/>
            <person name="Sykes S."/>
            <person name="Tchuinga P."/>
            <person name="Tenzing P."/>
            <person name="Tesfaye S."/>
            <person name="Thoulutsang D."/>
            <person name="Thoulutsang Y."/>
            <person name="Topham K."/>
            <person name="Topping I."/>
            <person name="Tsamla T."/>
            <person name="Vassiliev H."/>
            <person name="Venkataraman V."/>
            <person name="Vo A."/>
            <person name="Wangchuk T."/>
            <person name="Wangdi T."/>
            <person name="Weiand M."/>
            <person name="Wilkinson J."/>
            <person name="Wilson A."/>
            <person name="Yadav S."/>
            <person name="Yang S."/>
            <person name="Yang X."/>
            <person name="Young G."/>
            <person name="Yu Q."/>
            <person name="Zainoun J."/>
            <person name="Zembek L."/>
            <person name="Zimmer A."/>
            <person name="Lander E.S."/>
        </authorList>
    </citation>
    <scope>NUCLEOTIDE SEQUENCE [LARGE SCALE GENOMIC DNA]</scope>
    <source>
        <strain>Boxer</strain>
    </source>
</reference>
<reference key="2">
    <citation type="journal article" date="2008" name="Structure">
        <title>Structure of the mammalian 80S ribosome at 8.7 A resolution.</title>
        <authorList>
            <person name="Chandramouli P."/>
            <person name="Topf M."/>
            <person name="Menetret J.F."/>
            <person name="Eswar N."/>
            <person name="Cannone J.J."/>
            <person name="Gutell R.R."/>
            <person name="Sali A."/>
            <person name="Akey C.W."/>
        </authorList>
    </citation>
    <scope>STRUCTURE BY ELECTRON MICROSCOPY (8.70 ANGSTROMS)</scope>
</reference>
<feature type="chain" id="PRO_0000405590" description="Large ribosomal subunit protein eL19">
    <location>
        <begin position="1"/>
        <end position="196"/>
    </location>
</feature>
<feature type="region of interest" description="Disordered" evidence="3">
    <location>
        <begin position="157"/>
        <end position="176"/>
    </location>
</feature>
<feature type="compositionally biased region" description="Basic and acidic residues" evidence="3">
    <location>
        <begin position="159"/>
        <end position="176"/>
    </location>
</feature>
<feature type="modified residue" description="Citrulline" evidence="2">
    <location>
        <position position="5"/>
    </location>
</feature>
<feature type="modified residue" description="Phosphoserine" evidence="1">
    <location>
        <position position="13"/>
    </location>
</feature>
<feature type="modified residue" description="Citrulline" evidence="2">
    <location>
        <position position="16"/>
    </location>
</feature>
<feature type="modified residue" description="Citrulline" evidence="2">
    <location>
        <position position="38"/>
    </location>
</feature>
<feature type="modified residue" description="Phosphoserine" evidence="1">
    <location>
        <position position="164"/>
    </location>
</feature>
<feature type="modified residue" description="Phosphothreonine" evidence="1">
    <location>
        <position position="187"/>
    </location>
</feature>
<feature type="cross-link" description="Glycyl lysine isopeptide (Lys-Gly) (interchain with G-Cter in SUMO1)" evidence="1">
    <location>
        <position position="181"/>
    </location>
</feature>
<evidence type="ECO:0000250" key="1">
    <source>
        <dbReference type="UniProtKB" id="P84098"/>
    </source>
</evidence>
<evidence type="ECO:0000250" key="2">
    <source>
        <dbReference type="UniProtKB" id="P84099"/>
    </source>
</evidence>
<evidence type="ECO:0000256" key="3">
    <source>
        <dbReference type="SAM" id="MobiDB-lite"/>
    </source>
</evidence>
<evidence type="ECO:0000305" key="4"/>
<organism>
    <name type="scientific">Canis lupus familiaris</name>
    <name type="common">Dog</name>
    <name type="synonym">Canis familiaris</name>
    <dbReference type="NCBI Taxonomy" id="9615"/>
    <lineage>
        <taxon>Eukaryota</taxon>
        <taxon>Metazoa</taxon>
        <taxon>Chordata</taxon>
        <taxon>Craniata</taxon>
        <taxon>Vertebrata</taxon>
        <taxon>Euteleostomi</taxon>
        <taxon>Mammalia</taxon>
        <taxon>Eutheria</taxon>
        <taxon>Laurasiatheria</taxon>
        <taxon>Carnivora</taxon>
        <taxon>Caniformia</taxon>
        <taxon>Canidae</taxon>
        <taxon>Canis</taxon>
    </lineage>
</organism>